<proteinExistence type="evidence at protein level"/>
<organism>
    <name type="scientific">Haemophilus influenzae (strain ATCC 51907 / DSM 11121 / KW20 / Rd)</name>
    <dbReference type="NCBI Taxonomy" id="71421"/>
    <lineage>
        <taxon>Bacteria</taxon>
        <taxon>Pseudomonadati</taxon>
        <taxon>Pseudomonadota</taxon>
        <taxon>Gammaproteobacteria</taxon>
        <taxon>Pasteurellales</taxon>
        <taxon>Pasteurellaceae</taxon>
        <taxon>Haemophilus</taxon>
    </lineage>
</organism>
<protein>
    <recommendedName>
        <fullName evidence="1">Thiamine import ATP-binding protein ThiQ</fullName>
        <ecNumber evidence="1">7.6.2.15</ecNumber>
    </recommendedName>
</protein>
<keyword id="KW-0067">ATP-binding</keyword>
<keyword id="KW-0997">Cell inner membrane</keyword>
<keyword id="KW-1003">Cell membrane</keyword>
<keyword id="KW-0472">Membrane</keyword>
<keyword id="KW-0547">Nucleotide-binding</keyword>
<keyword id="KW-1185">Reference proteome</keyword>
<keyword id="KW-1278">Translocase</keyword>
<keyword id="KW-0813">Transport</keyword>
<comment type="function">
    <text evidence="1">Part of the ABC transporter complex ThiBPQ involved in thiamine import. Responsible for energy coupling to the transport system.</text>
</comment>
<comment type="catalytic activity">
    <reaction evidence="1">
        <text>thiamine(out) + ATP + H2O = thiamine(in) + ADP + phosphate + H(+)</text>
        <dbReference type="Rhea" id="RHEA:29811"/>
        <dbReference type="ChEBI" id="CHEBI:15377"/>
        <dbReference type="ChEBI" id="CHEBI:15378"/>
        <dbReference type="ChEBI" id="CHEBI:18385"/>
        <dbReference type="ChEBI" id="CHEBI:30616"/>
        <dbReference type="ChEBI" id="CHEBI:43474"/>
        <dbReference type="ChEBI" id="CHEBI:456216"/>
        <dbReference type="EC" id="7.6.2.15"/>
    </reaction>
</comment>
<comment type="subunit">
    <text evidence="1">The complex is composed of two ATP-binding proteins (ThiQ), two transmembrane proteins (ThiP) and a solute-binding protein (ThiB).</text>
</comment>
<comment type="subcellular location">
    <subcellularLocation>
        <location evidence="1">Cell inner membrane</location>
        <topology evidence="1">Peripheral membrane protein</topology>
    </subcellularLocation>
</comment>
<comment type="similarity">
    <text evidence="1">Belongs to the ABC transporter superfamily. Thiamine importer (TC 3.A.1.19.1) family.</text>
</comment>
<reference key="1">
    <citation type="journal article" date="1995" name="Science">
        <title>Whole-genome random sequencing and assembly of Haemophilus influenzae Rd.</title>
        <authorList>
            <person name="Fleischmann R.D."/>
            <person name="Adams M.D."/>
            <person name="White O."/>
            <person name="Clayton R.A."/>
            <person name="Kirkness E.F."/>
            <person name="Kerlavage A.R."/>
            <person name="Bult C.J."/>
            <person name="Tomb J.-F."/>
            <person name="Dougherty B.A."/>
            <person name="Merrick J.M."/>
            <person name="McKenney K."/>
            <person name="Sutton G.G."/>
            <person name="FitzHugh W."/>
            <person name="Fields C.A."/>
            <person name="Gocayne J.D."/>
            <person name="Scott J.D."/>
            <person name="Shirley R."/>
            <person name="Liu L.-I."/>
            <person name="Glodek A."/>
            <person name="Kelley J.M."/>
            <person name="Weidman J.F."/>
            <person name="Phillips C.A."/>
            <person name="Spriggs T."/>
            <person name="Hedblom E."/>
            <person name="Cotton M.D."/>
            <person name="Utterback T.R."/>
            <person name="Hanna M.C."/>
            <person name="Nguyen D.T."/>
            <person name="Saudek D.M."/>
            <person name="Brandon R.C."/>
            <person name="Fine L.D."/>
            <person name="Fritchman J.L."/>
            <person name="Fuhrmann J.L."/>
            <person name="Geoghagen N.S.M."/>
            <person name="Gnehm C.L."/>
            <person name="McDonald L.A."/>
            <person name="Small K.V."/>
            <person name="Fraser C.M."/>
            <person name="Smith H.O."/>
            <person name="Venter J.C."/>
        </authorList>
    </citation>
    <scope>NUCLEOTIDE SEQUENCE [LARGE SCALE GENOMIC DNA]</scope>
    <source>
        <strain>ATCC 51907 / DSM 11121 / KW20 / Rd</strain>
    </source>
</reference>
<reference key="2">
    <citation type="journal article" date="1998" name="Electrophoresis">
        <title>Reference map of the low molecular mass proteins of Haemophilus influenzae.</title>
        <authorList>
            <person name="Fountoulakis M."/>
            <person name="Juranville J.-F."/>
            <person name="Roeder D."/>
            <person name="Evers S."/>
            <person name="Berndt P."/>
            <person name="Langen H."/>
        </authorList>
    </citation>
    <scope>IDENTIFICATION BY MASS SPECTROMETRY</scope>
    <source>
        <strain>ATCC 51907 / DSM 11121 / KW20 / Rd</strain>
    </source>
</reference>
<feature type="chain" id="PRO_0000093023" description="Thiamine import ATP-binding protein ThiQ">
    <location>
        <begin position="1"/>
        <end position="215"/>
    </location>
</feature>
<feature type="domain" description="ABC transporter" evidence="1">
    <location>
        <begin position="2"/>
        <end position="215"/>
    </location>
</feature>
<feature type="binding site" evidence="1">
    <location>
        <begin position="32"/>
        <end position="39"/>
    </location>
    <ligand>
        <name>ATP</name>
        <dbReference type="ChEBI" id="CHEBI:30616"/>
    </ligand>
</feature>
<name>THIQ_HAEIN</name>
<evidence type="ECO:0000255" key="1">
    <source>
        <dbReference type="HAMAP-Rule" id="MF_01723"/>
    </source>
</evidence>
<sequence>MIYLNNVILNDKTLPMCFNLSVNAGERVAIIGESGAGKSTLLNLIAGFEFPAQGEIWLNDKNHTRSAPYERPVSMLFQENNLFPHLTVQQNLALGIKPSLKLTALEQEKIEQVACSVGLGDYLERLPNSLSGGQKQRVALARCLLRDKPILLLDEPFSALDQKLRVEMLALIAKLCDEKDLTLLLVTHQPSELIGSIDQVLVVENGQISQLQKGV</sequence>
<dbReference type="EC" id="7.6.2.15" evidence="1"/>
<dbReference type="EMBL" id="L42023">
    <property type="protein sequence ID" value="AAC22680.1"/>
    <property type="molecule type" value="Genomic_DNA"/>
</dbReference>
<dbReference type="PIR" id="E64164">
    <property type="entry name" value="E64164"/>
</dbReference>
<dbReference type="RefSeq" id="NP_439181.1">
    <property type="nucleotide sequence ID" value="NC_000907.1"/>
</dbReference>
<dbReference type="SMR" id="P44986"/>
<dbReference type="STRING" id="71421.HI_1021"/>
<dbReference type="EnsemblBacteria" id="AAC22680">
    <property type="protein sequence ID" value="AAC22680"/>
    <property type="gene ID" value="HI_1021"/>
</dbReference>
<dbReference type="KEGG" id="hin:HI_1021"/>
<dbReference type="PATRIC" id="fig|71421.8.peg.1065"/>
<dbReference type="eggNOG" id="COG3840">
    <property type="taxonomic scope" value="Bacteria"/>
</dbReference>
<dbReference type="HOGENOM" id="CLU_000604_1_22_6"/>
<dbReference type="OrthoDB" id="9802264at2"/>
<dbReference type="PhylomeDB" id="P44986"/>
<dbReference type="BioCyc" id="HINF71421:G1GJ1-1061-MONOMER"/>
<dbReference type="Proteomes" id="UP000000579">
    <property type="component" value="Chromosome"/>
</dbReference>
<dbReference type="GO" id="GO:0005886">
    <property type="term" value="C:plasma membrane"/>
    <property type="evidence" value="ECO:0007669"/>
    <property type="project" value="UniProtKB-SubCell"/>
</dbReference>
<dbReference type="GO" id="GO:0048502">
    <property type="term" value="F:ABC-type thiamine transporter activity"/>
    <property type="evidence" value="ECO:0007669"/>
    <property type="project" value="UniProtKB-EC"/>
</dbReference>
<dbReference type="GO" id="GO:0005524">
    <property type="term" value="F:ATP binding"/>
    <property type="evidence" value="ECO:0007669"/>
    <property type="project" value="UniProtKB-KW"/>
</dbReference>
<dbReference type="GO" id="GO:0016887">
    <property type="term" value="F:ATP hydrolysis activity"/>
    <property type="evidence" value="ECO:0007669"/>
    <property type="project" value="InterPro"/>
</dbReference>
<dbReference type="Gene3D" id="3.40.50.300">
    <property type="entry name" value="P-loop containing nucleotide triphosphate hydrolases"/>
    <property type="match status" value="1"/>
</dbReference>
<dbReference type="InterPro" id="IPR003593">
    <property type="entry name" value="AAA+_ATPase"/>
</dbReference>
<dbReference type="InterPro" id="IPR050093">
    <property type="entry name" value="ABC_SmlMolc_Importer"/>
</dbReference>
<dbReference type="InterPro" id="IPR003439">
    <property type="entry name" value="ABC_transporter-like_ATP-bd"/>
</dbReference>
<dbReference type="InterPro" id="IPR017871">
    <property type="entry name" value="ABC_transporter-like_CS"/>
</dbReference>
<dbReference type="InterPro" id="IPR027417">
    <property type="entry name" value="P-loop_NTPase"/>
</dbReference>
<dbReference type="InterPro" id="IPR005968">
    <property type="entry name" value="Thiamine_ABC_ThiQ"/>
</dbReference>
<dbReference type="NCBIfam" id="TIGR01277">
    <property type="entry name" value="thiQ"/>
    <property type="match status" value="1"/>
</dbReference>
<dbReference type="PANTHER" id="PTHR42781">
    <property type="entry name" value="SPERMIDINE/PUTRESCINE IMPORT ATP-BINDING PROTEIN POTA"/>
    <property type="match status" value="1"/>
</dbReference>
<dbReference type="PANTHER" id="PTHR42781:SF1">
    <property type="entry name" value="THIAMINE IMPORT ATP-BINDING PROTEIN THIQ"/>
    <property type="match status" value="1"/>
</dbReference>
<dbReference type="Pfam" id="PF00005">
    <property type="entry name" value="ABC_tran"/>
    <property type="match status" value="1"/>
</dbReference>
<dbReference type="SMART" id="SM00382">
    <property type="entry name" value="AAA"/>
    <property type="match status" value="1"/>
</dbReference>
<dbReference type="SUPFAM" id="SSF52540">
    <property type="entry name" value="P-loop containing nucleoside triphosphate hydrolases"/>
    <property type="match status" value="1"/>
</dbReference>
<dbReference type="PROSITE" id="PS00211">
    <property type="entry name" value="ABC_TRANSPORTER_1"/>
    <property type="match status" value="1"/>
</dbReference>
<dbReference type="PROSITE" id="PS50893">
    <property type="entry name" value="ABC_TRANSPORTER_2"/>
    <property type="match status" value="1"/>
</dbReference>
<dbReference type="PROSITE" id="PS51288">
    <property type="entry name" value="THIQ"/>
    <property type="match status" value="1"/>
</dbReference>
<accession>P44986</accession>
<gene>
    <name evidence="1" type="primary">thiQ</name>
    <name type="ordered locus">HI_1021</name>
</gene>